<reference key="1">
    <citation type="submission" date="2008-04" db="EMBL/GenBank/DDBJ databases">
        <title>Complete sequence of chromosome of Natranaerobius thermophilus JW/NM-WN-LF.</title>
        <authorList>
            <consortium name="US DOE Joint Genome Institute"/>
            <person name="Copeland A."/>
            <person name="Lucas S."/>
            <person name="Lapidus A."/>
            <person name="Glavina del Rio T."/>
            <person name="Dalin E."/>
            <person name="Tice H."/>
            <person name="Bruce D."/>
            <person name="Goodwin L."/>
            <person name="Pitluck S."/>
            <person name="Chertkov O."/>
            <person name="Brettin T."/>
            <person name="Detter J.C."/>
            <person name="Han C."/>
            <person name="Kuske C.R."/>
            <person name="Schmutz J."/>
            <person name="Larimer F."/>
            <person name="Land M."/>
            <person name="Hauser L."/>
            <person name="Kyrpides N."/>
            <person name="Lykidis A."/>
            <person name="Mesbah N.M."/>
            <person name="Wiegel J."/>
        </authorList>
    </citation>
    <scope>NUCLEOTIDE SEQUENCE [LARGE SCALE GENOMIC DNA]</scope>
    <source>
        <strain>ATCC BAA-1301 / DSM 18059 / JW/NM-WN-LF</strain>
    </source>
</reference>
<proteinExistence type="inferred from homology"/>
<feature type="chain" id="PRO_1000115752" description="1-deoxy-D-xylulose-5-phosphate synthase">
    <location>
        <begin position="1"/>
        <end position="631"/>
    </location>
</feature>
<feature type="binding site" evidence="1">
    <location>
        <position position="74"/>
    </location>
    <ligand>
        <name>thiamine diphosphate</name>
        <dbReference type="ChEBI" id="CHEBI:58937"/>
    </ligand>
</feature>
<feature type="binding site" evidence="1">
    <location>
        <begin position="115"/>
        <end position="117"/>
    </location>
    <ligand>
        <name>thiamine diphosphate</name>
        <dbReference type="ChEBI" id="CHEBI:58937"/>
    </ligand>
</feature>
<feature type="binding site" evidence="1">
    <location>
        <position position="146"/>
    </location>
    <ligand>
        <name>Mg(2+)</name>
        <dbReference type="ChEBI" id="CHEBI:18420"/>
    </ligand>
</feature>
<feature type="binding site" evidence="1">
    <location>
        <begin position="147"/>
        <end position="148"/>
    </location>
    <ligand>
        <name>thiamine diphosphate</name>
        <dbReference type="ChEBI" id="CHEBI:58937"/>
    </ligand>
</feature>
<feature type="binding site" evidence="1">
    <location>
        <position position="175"/>
    </location>
    <ligand>
        <name>Mg(2+)</name>
        <dbReference type="ChEBI" id="CHEBI:18420"/>
    </ligand>
</feature>
<feature type="binding site" evidence="1">
    <location>
        <position position="175"/>
    </location>
    <ligand>
        <name>thiamine diphosphate</name>
        <dbReference type="ChEBI" id="CHEBI:58937"/>
    </ligand>
</feature>
<feature type="binding site" evidence="1">
    <location>
        <position position="286"/>
    </location>
    <ligand>
        <name>thiamine diphosphate</name>
        <dbReference type="ChEBI" id="CHEBI:58937"/>
    </ligand>
</feature>
<feature type="binding site" evidence="1">
    <location>
        <position position="368"/>
    </location>
    <ligand>
        <name>thiamine diphosphate</name>
        <dbReference type="ChEBI" id="CHEBI:58937"/>
    </ligand>
</feature>
<protein>
    <recommendedName>
        <fullName evidence="1">1-deoxy-D-xylulose-5-phosphate synthase</fullName>
        <ecNumber evidence="1">2.2.1.7</ecNumber>
    </recommendedName>
    <alternativeName>
        <fullName evidence="1">1-deoxyxylulose-5-phosphate synthase</fullName>
        <shortName evidence="1">DXP synthase</shortName>
        <shortName evidence="1">DXPS</shortName>
    </alternativeName>
</protein>
<keyword id="KW-0414">Isoprene biosynthesis</keyword>
<keyword id="KW-0460">Magnesium</keyword>
<keyword id="KW-0479">Metal-binding</keyword>
<keyword id="KW-1185">Reference proteome</keyword>
<keyword id="KW-0784">Thiamine biosynthesis</keyword>
<keyword id="KW-0786">Thiamine pyrophosphate</keyword>
<keyword id="KW-0808">Transferase</keyword>
<name>DXS_NATTJ</name>
<organism>
    <name type="scientific">Natranaerobius thermophilus (strain ATCC BAA-1301 / DSM 18059 / JW/NM-WN-LF)</name>
    <dbReference type="NCBI Taxonomy" id="457570"/>
    <lineage>
        <taxon>Bacteria</taxon>
        <taxon>Bacillati</taxon>
        <taxon>Bacillota</taxon>
        <taxon>Clostridia</taxon>
        <taxon>Natranaerobiales</taxon>
        <taxon>Natranaerobiaceae</taxon>
        <taxon>Natranaerobius</taxon>
    </lineage>
</organism>
<comment type="function">
    <text evidence="1">Catalyzes the acyloin condensation reaction between C atoms 2 and 3 of pyruvate and glyceraldehyde 3-phosphate to yield 1-deoxy-D-xylulose-5-phosphate (DXP).</text>
</comment>
<comment type="catalytic activity">
    <reaction evidence="1">
        <text>D-glyceraldehyde 3-phosphate + pyruvate + H(+) = 1-deoxy-D-xylulose 5-phosphate + CO2</text>
        <dbReference type="Rhea" id="RHEA:12605"/>
        <dbReference type="ChEBI" id="CHEBI:15361"/>
        <dbReference type="ChEBI" id="CHEBI:15378"/>
        <dbReference type="ChEBI" id="CHEBI:16526"/>
        <dbReference type="ChEBI" id="CHEBI:57792"/>
        <dbReference type="ChEBI" id="CHEBI:59776"/>
        <dbReference type="EC" id="2.2.1.7"/>
    </reaction>
</comment>
<comment type="cofactor">
    <cofactor evidence="1">
        <name>Mg(2+)</name>
        <dbReference type="ChEBI" id="CHEBI:18420"/>
    </cofactor>
    <text evidence="1">Binds 1 Mg(2+) ion per subunit.</text>
</comment>
<comment type="cofactor">
    <cofactor evidence="1">
        <name>thiamine diphosphate</name>
        <dbReference type="ChEBI" id="CHEBI:58937"/>
    </cofactor>
    <text evidence="1">Binds 1 thiamine pyrophosphate per subunit.</text>
</comment>
<comment type="pathway">
    <text evidence="1">Metabolic intermediate biosynthesis; 1-deoxy-D-xylulose 5-phosphate biosynthesis; 1-deoxy-D-xylulose 5-phosphate from D-glyceraldehyde 3-phosphate and pyruvate: step 1/1.</text>
</comment>
<comment type="subunit">
    <text evidence="1">Homodimer.</text>
</comment>
<comment type="similarity">
    <text evidence="1">Belongs to the transketolase family. DXPS subfamily.</text>
</comment>
<dbReference type="EC" id="2.2.1.7" evidence="1"/>
<dbReference type="EMBL" id="CP001034">
    <property type="protein sequence ID" value="ACB85268.1"/>
    <property type="molecule type" value="Genomic_DNA"/>
</dbReference>
<dbReference type="RefSeq" id="WP_012448136.1">
    <property type="nucleotide sequence ID" value="NC_010718.1"/>
</dbReference>
<dbReference type="SMR" id="B2A526"/>
<dbReference type="FunCoup" id="B2A526">
    <property type="interactions" value="339"/>
</dbReference>
<dbReference type="STRING" id="457570.Nther_1694"/>
<dbReference type="KEGG" id="nth:Nther_1694"/>
<dbReference type="eggNOG" id="COG1154">
    <property type="taxonomic scope" value="Bacteria"/>
</dbReference>
<dbReference type="HOGENOM" id="CLU_009227_1_4_9"/>
<dbReference type="InParanoid" id="B2A526"/>
<dbReference type="OrthoDB" id="9803371at2"/>
<dbReference type="UniPathway" id="UPA00064">
    <property type="reaction ID" value="UER00091"/>
</dbReference>
<dbReference type="Proteomes" id="UP000001683">
    <property type="component" value="Chromosome"/>
</dbReference>
<dbReference type="GO" id="GO:0005829">
    <property type="term" value="C:cytosol"/>
    <property type="evidence" value="ECO:0007669"/>
    <property type="project" value="TreeGrafter"/>
</dbReference>
<dbReference type="GO" id="GO:0008661">
    <property type="term" value="F:1-deoxy-D-xylulose-5-phosphate synthase activity"/>
    <property type="evidence" value="ECO:0007669"/>
    <property type="project" value="UniProtKB-UniRule"/>
</dbReference>
<dbReference type="GO" id="GO:0000287">
    <property type="term" value="F:magnesium ion binding"/>
    <property type="evidence" value="ECO:0007669"/>
    <property type="project" value="UniProtKB-UniRule"/>
</dbReference>
<dbReference type="GO" id="GO:0030976">
    <property type="term" value="F:thiamine pyrophosphate binding"/>
    <property type="evidence" value="ECO:0007669"/>
    <property type="project" value="UniProtKB-UniRule"/>
</dbReference>
<dbReference type="GO" id="GO:0052865">
    <property type="term" value="P:1-deoxy-D-xylulose 5-phosphate biosynthetic process"/>
    <property type="evidence" value="ECO:0007669"/>
    <property type="project" value="UniProtKB-UniPathway"/>
</dbReference>
<dbReference type="GO" id="GO:0019288">
    <property type="term" value="P:isopentenyl diphosphate biosynthetic process, methylerythritol 4-phosphate pathway"/>
    <property type="evidence" value="ECO:0007669"/>
    <property type="project" value="TreeGrafter"/>
</dbReference>
<dbReference type="GO" id="GO:0016114">
    <property type="term" value="P:terpenoid biosynthetic process"/>
    <property type="evidence" value="ECO:0007669"/>
    <property type="project" value="UniProtKB-UniRule"/>
</dbReference>
<dbReference type="GO" id="GO:0009228">
    <property type="term" value="P:thiamine biosynthetic process"/>
    <property type="evidence" value="ECO:0007669"/>
    <property type="project" value="UniProtKB-UniRule"/>
</dbReference>
<dbReference type="CDD" id="cd02007">
    <property type="entry name" value="TPP_DXS"/>
    <property type="match status" value="1"/>
</dbReference>
<dbReference type="CDD" id="cd07033">
    <property type="entry name" value="TPP_PYR_DXS_TK_like"/>
    <property type="match status" value="1"/>
</dbReference>
<dbReference type="FunFam" id="3.40.50.920:FF:000002">
    <property type="entry name" value="1-deoxy-D-xylulose-5-phosphate synthase"/>
    <property type="match status" value="1"/>
</dbReference>
<dbReference type="FunFam" id="3.40.50.970:FF:000005">
    <property type="entry name" value="1-deoxy-D-xylulose-5-phosphate synthase"/>
    <property type="match status" value="1"/>
</dbReference>
<dbReference type="Gene3D" id="3.40.50.920">
    <property type="match status" value="1"/>
</dbReference>
<dbReference type="Gene3D" id="3.40.50.970">
    <property type="match status" value="2"/>
</dbReference>
<dbReference type="HAMAP" id="MF_00315">
    <property type="entry name" value="DXP_synth"/>
    <property type="match status" value="1"/>
</dbReference>
<dbReference type="InterPro" id="IPR005477">
    <property type="entry name" value="Dxylulose-5-P_synthase"/>
</dbReference>
<dbReference type="InterPro" id="IPR029061">
    <property type="entry name" value="THDP-binding"/>
</dbReference>
<dbReference type="InterPro" id="IPR009014">
    <property type="entry name" value="Transketo_C/PFOR_II"/>
</dbReference>
<dbReference type="InterPro" id="IPR005475">
    <property type="entry name" value="Transketolase-like_Pyr-bd"/>
</dbReference>
<dbReference type="InterPro" id="IPR020826">
    <property type="entry name" value="Transketolase_BS"/>
</dbReference>
<dbReference type="InterPro" id="IPR033248">
    <property type="entry name" value="Transketolase_C"/>
</dbReference>
<dbReference type="InterPro" id="IPR049557">
    <property type="entry name" value="Transketolase_CS"/>
</dbReference>
<dbReference type="NCBIfam" id="TIGR00204">
    <property type="entry name" value="dxs"/>
    <property type="match status" value="1"/>
</dbReference>
<dbReference type="NCBIfam" id="NF003933">
    <property type="entry name" value="PRK05444.2-2"/>
    <property type="match status" value="1"/>
</dbReference>
<dbReference type="PANTHER" id="PTHR43322">
    <property type="entry name" value="1-D-DEOXYXYLULOSE 5-PHOSPHATE SYNTHASE-RELATED"/>
    <property type="match status" value="1"/>
</dbReference>
<dbReference type="PANTHER" id="PTHR43322:SF5">
    <property type="entry name" value="1-DEOXY-D-XYLULOSE-5-PHOSPHATE SYNTHASE, CHLOROPLASTIC"/>
    <property type="match status" value="1"/>
</dbReference>
<dbReference type="Pfam" id="PF13292">
    <property type="entry name" value="DXP_synthase_N"/>
    <property type="match status" value="1"/>
</dbReference>
<dbReference type="Pfam" id="PF02779">
    <property type="entry name" value="Transket_pyr"/>
    <property type="match status" value="1"/>
</dbReference>
<dbReference type="Pfam" id="PF02780">
    <property type="entry name" value="Transketolase_C"/>
    <property type="match status" value="1"/>
</dbReference>
<dbReference type="SMART" id="SM00861">
    <property type="entry name" value="Transket_pyr"/>
    <property type="match status" value="1"/>
</dbReference>
<dbReference type="SUPFAM" id="SSF52518">
    <property type="entry name" value="Thiamin diphosphate-binding fold (THDP-binding)"/>
    <property type="match status" value="2"/>
</dbReference>
<dbReference type="SUPFAM" id="SSF52922">
    <property type="entry name" value="TK C-terminal domain-like"/>
    <property type="match status" value="1"/>
</dbReference>
<dbReference type="PROSITE" id="PS00801">
    <property type="entry name" value="TRANSKETOLASE_1"/>
    <property type="match status" value="1"/>
</dbReference>
<dbReference type="PROSITE" id="PS00802">
    <property type="entry name" value="TRANSKETOLASE_2"/>
    <property type="match status" value="1"/>
</dbReference>
<sequence>MTKLLSYINTSEDLKHLSTEDLNKLAEELREFLISSISITGGHLAPNLGVVELTLAIHKVFSPIQDKIVWDVGHQSYIHKILTGRKEQFSTLRQFGGLSGFPKPEESRYDAFGTGHSSTSISAALGMAKARDLQGSNEEVLAVIGDGAMTGGMAFEAMNHAGHEQANMTVILNDNEMSIGTNVGALSSYLSRLRTDPKYHRIKEDVEFLLKRIPAIGGKMMKSVERVKDSMKYLMVSGMLFEELGFTYIGPIDGHNIPQLMEVLNNAKDKNGPVLVHVITKKGKGYEPAEKFPDKFHGTGPFEIETGNAPKKAETAPSYSKVFGDTISEIARKNESVVAITAAMKDGTGLTNFAREFPERFFDVGIAEQHAITFAAGLARKGFKPVVAIYSTFLQRAYDQIIHDVCMQDNPVIFAIDRAGIVGGDGETHQGLYDLSYLRSIPNLIVMAPKDEAELQRMLNTAVNINKPVAIRYPRGKGEGVTLWENMTPIPLYKGETIREGSQVAMIGVGKMVPDMLEVADMLKKEGIEPTVFNARFVKPLDESSILEIAQKHEYIYTFEENTELGGFGSQVLECLSKHGLAHKLIDRFCLPDEYIPHGDRSKVLSQYSLHSQELINKILNRLRGEQIEQG</sequence>
<evidence type="ECO:0000255" key="1">
    <source>
        <dbReference type="HAMAP-Rule" id="MF_00315"/>
    </source>
</evidence>
<accession>B2A526</accession>
<gene>
    <name evidence="1" type="primary">dxs</name>
    <name type="ordered locus">Nther_1694</name>
</gene>